<comment type="function">
    <text evidence="1">This protein binds specifically to 23S rRNA; its binding is stimulated by other ribosomal proteins, e.g. L4, L17, and L20. It is important during the early stages of 50S assembly. It makes multiple contacts with different domains of the 23S rRNA in the assembled 50S subunit and ribosome (By similarity).</text>
</comment>
<comment type="function">
    <text evidence="1">The globular domain of the protein is located near the polypeptide exit tunnel on the outside of the subunit, while an extended beta-hairpin is found that lines the wall of the exit tunnel in the center of the 70S ribosome.</text>
</comment>
<comment type="subunit">
    <text evidence="1">Part of the 50S ribosomal subunit.</text>
</comment>
<comment type="similarity">
    <text evidence="1">Belongs to the universal ribosomal protein uL22 family.</text>
</comment>
<comment type="sequence caution" evidence="2">
    <conflict type="erroneous initiation">
        <sequence resource="EMBL-CDS" id="CAB82075"/>
    </conflict>
</comment>
<sequence>MEARAQARYIRVTPMKARRVVDLIRGMDATEAQAVLRFAPQAASVPVGKVLDSAIANAAHNYDHTDADSLFISEAYVDEGPTLKRFRPRAQGRAYRIRKRTSHITVVVSSKEGTR</sequence>
<dbReference type="EMBL" id="AL939121">
    <property type="protein sequence ID" value="CAB82075.1"/>
    <property type="status" value="ALT_INIT"/>
    <property type="molecule type" value="Genomic_DNA"/>
</dbReference>
<dbReference type="RefSeq" id="NP_628866.1">
    <property type="nucleotide sequence ID" value="NC_003888.3"/>
</dbReference>
<dbReference type="RefSeq" id="WP_003974262.1">
    <property type="nucleotide sequence ID" value="NZ_VNID01000016.1"/>
</dbReference>
<dbReference type="SMR" id="Q9L0D5"/>
<dbReference type="FunCoup" id="Q9L0D5">
    <property type="interactions" value="146"/>
</dbReference>
<dbReference type="STRING" id="100226.gene:17762356"/>
<dbReference type="PaxDb" id="100226-SCO4707"/>
<dbReference type="GeneID" id="97462953"/>
<dbReference type="KEGG" id="sco:SCO4707"/>
<dbReference type="PATRIC" id="fig|100226.15.peg.4778"/>
<dbReference type="eggNOG" id="COG0091">
    <property type="taxonomic scope" value="Bacteria"/>
</dbReference>
<dbReference type="HOGENOM" id="CLU_083987_3_3_11"/>
<dbReference type="InParanoid" id="Q9L0D5"/>
<dbReference type="OrthoDB" id="9805969at2"/>
<dbReference type="PhylomeDB" id="Q9L0D5"/>
<dbReference type="Proteomes" id="UP000001973">
    <property type="component" value="Chromosome"/>
</dbReference>
<dbReference type="GO" id="GO:0022625">
    <property type="term" value="C:cytosolic large ribosomal subunit"/>
    <property type="evidence" value="ECO:0000318"/>
    <property type="project" value="GO_Central"/>
</dbReference>
<dbReference type="GO" id="GO:0019843">
    <property type="term" value="F:rRNA binding"/>
    <property type="evidence" value="ECO:0007669"/>
    <property type="project" value="UniProtKB-UniRule"/>
</dbReference>
<dbReference type="GO" id="GO:0003735">
    <property type="term" value="F:structural constituent of ribosome"/>
    <property type="evidence" value="ECO:0000318"/>
    <property type="project" value="GO_Central"/>
</dbReference>
<dbReference type="GO" id="GO:0006412">
    <property type="term" value="P:translation"/>
    <property type="evidence" value="ECO:0000318"/>
    <property type="project" value="GO_Central"/>
</dbReference>
<dbReference type="CDD" id="cd00336">
    <property type="entry name" value="Ribosomal_L22"/>
    <property type="match status" value="1"/>
</dbReference>
<dbReference type="FunFam" id="3.90.470.10:FF:000002">
    <property type="entry name" value="50S ribosomal protein L22"/>
    <property type="match status" value="1"/>
</dbReference>
<dbReference type="Gene3D" id="3.90.470.10">
    <property type="entry name" value="Ribosomal protein L22/L17"/>
    <property type="match status" value="1"/>
</dbReference>
<dbReference type="HAMAP" id="MF_01331_B">
    <property type="entry name" value="Ribosomal_uL22_B"/>
    <property type="match status" value="1"/>
</dbReference>
<dbReference type="InterPro" id="IPR001063">
    <property type="entry name" value="Ribosomal_uL22"/>
</dbReference>
<dbReference type="InterPro" id="IPR005727">
    <property type="entry name" value="Ribosomal_uL22_bac/chlpt-type"/>
</dbReference>
<dbReference type="InterPro" id="IPR047867">
    <property type="entry name" value="Ribosomal_uL22_bac/org-type"/>
</dbReference>
<dbReference type="InterPro" id="IPR018260">
    <property type="entry name" value="Ribosomal_uL22_CS"/>
</dbReference>
<dbReference type="InterPro" id="IPR036394">
    <property type="entry name" value="Ribosomal_uL22_sf"/>
</dbReference>
<dbReference type="NCBIfam" id="TIGR01044">
    <property type="entry name" value="rplV_bact"/>
    <property type="match status" value="1"/>
</dbReference>
<dbReference type="PANTHER" id="PTHR13501">
    <property type="entry name" value="CHLOROPLAST 50S RIBOSOMAL PROTEIN L22-RELATED"/>
    <property type="match status" value="1"/>
</dbReference>
<dbReference type="PANTHER" id="PTHR13501:SF8">
    <property type="entry name" value="LARGE RIBOSOMAL SUBUNIT PROTEIN UL22M"/>
    <property type="match status" value="1"/>
</dbReference>
<dbReference type="Pfam" id="PF00237">
    <property type="entry name" value="Ribosomal_L22"/>
    <property type="match status" value="1"/>
</dbReference>
<dbReference type="SUPFAM" id="SSF54843">
    <property type="entry name" value="Ribosomal protein L22"/>
    <property type="match status" value="1"/>
</dbReference>
<dbReference type="PROSITE" id="PS00464">
    <property type="entry name" value="RIBOSOMAL_L22"/>
    <property type="match status" value="1"/>
</dbReference>
<name>RL22_STRCO</name>
<feature type="chain" id="PRO_0000125234" description="Large ribosomal subunit protein uL22">
    <location>
        <begin position="1"/>
        <end position="115"/>
    </location>
</feature>
<reference key="1">
    <citation type="journal article" date="2002" name="Nature">
        <title>Complete genome sequence of the model actinomycete Streptomyces coelicolor A3(2).</title>
        <authorList>
            <person name="Bentley S.D."/>
            <person name="Chater K.F."/>
            <person name="Cerdeno-Tarraga A.-M."/>
            <person name="Challis G.L."/>
            <person name="Thomson N.R."/>
            <person name="James K.D."/>
            <person name="Harris D.E."/>
            <person name="Quail M.A."/>
            <person name="Kieser H."/>
            <person name="Harper D."/>
            <person name="Bateman A."/>
            <person name="Brown S."/>
            <person name="Chandra G."/>
            <person name="Chen C.W."/>
            <person name="Collins M."/>
            <person name="Cronin A."/>
            <person name="Fraser A."/>
            <person name="Goble A."/>
            <person name="Hidalgo J."/>
            <person name="Hornsby T."/>
            <person name="Howarth S."/>
            <person name="Huang C.-H."/>
            <person name="Kieser T."/>
            <person name="Larke L."/>
            <person name="Murphy L.D."/>
            <person name="Oliver K."/>
            <person name="O'Neil S."/>
            <person name="Rabbinowitsch E."/>
            <person name="Rajandream M.A."/>
            <person name="Rutherford K.M."/>
            <person name="Rutter S."/>
            <person name="Seeger K."/>
            <person name="Saunders D."/>
            <person name="Sharp S."/>
            <person name="Squares R."/>
            <person name="Squares S."/>
            <person name="Taylor K."/>
            <person name="Warren T."/>
            <person name="Wietzorrek A."/>
            <person name="Woodward J.R."/>
            <person name="Barrell B.G."/>
            <person name="Parkhill J."/>
            <person name="Hopwood D.A."/>
        </authorList>
    </citation>
    <scope>NUCLEOTIDE SEQUENCE [LARGE SCALE GENOMIC DNA]</scope>
    <source>
        <strain>ATCC BAA-471 / A3(2) / M145</strain>
    </source>
</reference>
<proteinExistence type="inferred from homology"/>
<keyword id="KW-1185">Reference proteome</keyword>
<keyword id="KW-0687">Ribonucleoprotein</keyword>
<keyword id="KW-0689">Ribosomal protein</keyword>
<keyword id="KW-0694">RNA-binding</keyword>
<keyword id="KW-0699">rRNA-binding</keyword>
<organism>
    <name type="scientific">Streptomyces coelicolor (strain ATCC BAA-471 / A3(2) / M145)</name>
    <dbReference type="NCBI Taxonomy" id="100226"/>
    <lineage>
        <taxon>Bacteria</taxon>
        <taxon>Bacillati</taxon>
        <taxon>Actinomycetota</taxon>
        <taxon>Actinomycetes</taxon>
        <taxon>Kitasatosporales</taxon>
        <taxon>Streptomycetaceae</taxon>
        <taxon>Streptomyces</taxon>
        <taxon>Streptomyces albidoflavus group</taxon>
    </lineage>
</organism>
<evidence type="ECO:0000255" key="1">
    <source>
        <dbReference type="HAMAP-Rule" id="MF_01331"/>
    </source>
</evidence>
<evidence type="ECO:0000305" key="2"/>
<gene>
    <name evidence="1" type="primary">rplV</name>
    <name type="ordered locus">SCO4707</name>
    <name type="ORF">SCD31.32</name>
</gene>
<accession>Q9L0D5</accession>
<protein>
    <recommendedName>
        <fullName evidence="1">Large ribosomal subunit protein uL22</fullName>
    </recommendedName>
    <alternativeName>
        <fullName evidence="2">50S ribosomal protein L22</fullName>
    </alternativeName>
</protein>